<proteinExistence type="inferred from homology"/>
<organism>
    <name type="scientific">Paracoccus denitrificans (strain Pd 1222)</name>
    <dbReference type="NCBI Taxonomy" id="318586"/>
    <lineage>
        <taxon>Bacteria</taxon>
        <taxon>Pseudomonadati</taxon>
        <taxon>Pseudomonadota</taxon>
        <taxon>Alphaproteobacteria</taxon>
        <taxon>Rhodobacterales</taxon>
        <taxon>Paracoccaceae</taxon>
        <taxon>Paracoccus</taxon>
    </lineage>
</organism>
<reference key="1">
    <citation type="submission" date="2006-12" db="EMBL/GenBank/DDBJ databases">
        <title>Complete sequence of chromosome 1 of Paracoccus denitrificans PD1222.</title>
        <authorList>
            <person name="Copeland A."/>
            <person name="Lucas S."/>
            <person name="Lapidus A."/>
            <person name="Barry K."/>
            <person name="Detter J.C."/>
            <person name="Glavina del Rio T."/>
            <person name="Hammon N."/>
            <person name="Israni S."/>
            <person name="Dalin E."/>
            <person name="Tice H."/>
            <person name="Pitluck S."/>
            <person name="Munk A.C."/>
            <person name="Brettin T."/>
            <person name="Bruce D."/>
            <person name="Han C."/>
            <person name="Tapia R."/>
            <person name="Gilna P."/>
            <person name="Schmutz J."/>
            <person name="Larimer F."/>
            <person name="Land M."/>
            <person name="Hauser L."/>
            <person name="Kyrpides N."/>
            <person name="Lykidis A."/>
            <person name="Spiro S."/>
            <person name="Richardson D.J."/>
            <person name="Moir J.W.B."/>
            <person name="Ferguson S.J."/>
            <person name="van Spanning R.J.M."/>
            <person name="Richardson P."/>
        </authorList>
    </citation>
    <scope>NUCLEOTIDE SEQUENCE [LARGE SCALE GENOMIC DNA]</scope>
    <source>
        <strain>Pd 1222</strain>
    </source>
</reference>
<comment type="function">
    <text evidence="1">Binds to the 23S rRNA.</text>
</comment>
<comment type="similarity">
    <text evidence="1">Belongs to the bacterial ribosomal protein bL9 family.</text>
</comment>
<keyword id="KW-1185">Reference proteome</keyword>
<keyword id="KW-0687">Ribonucleoprotein</keyword>
<keyword id="KW-0689">Ribosomal protein</keyword>
<keyword id="KW-0694">RNA-binding</keyword>
<keyword id="KW-0699">rRNA-binding</keyword>
<evidence type="ECO:0000255" key="1">
    <source>
        <dbReference type="HAMAP-Rule" id="MF_00503"/>
    </source>
</evidence>
<evidence type="ECO:0000305" key="2"/>
<dbReference type="EMBL" id="CP000489">
    <property type="protein sequence ID" value="ABL69000.1"/>
    <property type="molecule type" value="Genomic_DNA"/>
</dbReference>
<dbReference type="RefSeq" id="WP_011747228.1">
    <property type="nucleotide sequence ID" value="NC_008686.1"/>
</dbReference>
<dbReference type="SMR" id="A1B0F6"/>
<dbReference type="STRING" id="318586.Pden_0889"/>
<dbReference type="EnsemblBacteria" id="ABL69000">
    <property type="protein sequence ID" value="ABL69000"/>
    <property type="gene ID" value="Pden_0889"/>
</dbReference>
<dbReference type="GeneID" id="93452111"/>
<dbReference type="KEGG" id="pde:Pden_0889"/>
<dbReference type="eggNOG" id="COG0359">
    <property type="taxonomic scope" value="Bacteria"/>
</dbReference>
<dbReference type="HOGENOM" id="CLU_078938_1_0_5"/>
<dbReference type="OrthoDB" id="9788336at2"/>
<dbReference type="Proteomes" id="UP000000361">
    <property type="component" value="Chromosome 1"/>
</dbReference>
<dbReference type="GO" id="GO:1990904">
    <property type="term" value="C:ribonucleoprotein complex"/>
    <property type="evidence" value="ECO:0007669"/>
    <property type="project" value="UniProtKB-KW"/>
</dbReference>
<dbReference type="GO" id="GO:0005840">
    <property type="term" value="C:ribosome"/>
    <property type="evidence" value="ECO:0007669"/>
    <property type="project" value="UniProtKB-KW"/>
</dbReference>
<dbReference type="GO" id="GO:0019843">
    <property type="term" value="F:rRNA binding"/>
    <property type="evidence" value="ECO:0007669"/>
    <property type="project" value="UniProtKB-UniRule"/>
</dbReference>
<dbReference type="GO" id="GO:0003735">
    <property type="term" value="F:structural constituent of ribosome"/>
    <property type="evidence" value="ECO:0007669"/>
    <property type="project" value="InterPro"/>
</dbReference>
<dbReference type="GO" id="GO:0006412">
    <property type="term" value="P:translation"/>
    <property type="evidence" value="ECO:0007669"/>
    <property type="project" value="UniProtKB-UniRule"/>
</dbReference>
<dbReference type="Gene3D" id="3.10.430.100">
    <property type="entry name" value="Ribosomal protein L9, C-terminal domain"/>
    <property type="match status" value="1"/>
</dbReference>
<dbReference type="Gene3D" id="3.40.5.10">
    <property type="entry name" value="Ribosomal protein L9, N-terminal domain"/>
    <property type="match status" value="1"/>
</dbReference>
<dbReference type="HAMAP" id="MF_00503">
    <property type="entry name" value="Ribosomal_bL9"/>
    <property type="match status" value="1"/>
</dbReference>
<dbReference type="InterPro" id="IPR000244">
    <property type="entry name" value="Ribosomal_bL9"/>
</dbReference>
<dbReference type="InterPro" id="IPR009027">
    <property type="entry name" value="Ribosomal_bL9/RNase_H1_N"/>
</dbReference>
<dbReference type="InterPro" id="IPR020594">
    <property type="entry name" value="Ribosomal_bL9_bac/chp"/>
</dbReference>
<dbReference type="InterPro" id="IPR020069">
    <property type="entry name" value="Ribosomal_bL9_C"/>
</dbReference>
<dbReference type="InterPro" id="IPR036791">
    <property type="entry name" value="Ribosomal_bL9_C_sf"/>
</dbReference>
<dbReference type="InterPro" id="IPR020070">
    <property type="entry name" value="Ribosomal_bL9_N"/>
</dbReference>
<dbReference type="InterPro" id="IPR036935">
    <property type="entry name" value="Ribosomal_bL9_N_sf"/>
</dbReference>
<dbReference type="NCBIfam" id="TIGR00158">
    <property type="entry name" value="L9"/>
    <property type="match status" value="1"/>
</dbReference>
<dbReference type="PANTHER" id="PTHR21368">
    <property type="entry name" value="50S RIBOSOMAL PROTEIN L9"/>
    <property type="match status" value="1"/>
</dbReference>
<dbReference type="Pfam" id="PF03948">
    <property type="entry name" value="Ribosomal_L9_C"/>
    <property type="match status" value="1"/>
</dbReference>
<dbReference type="Pfam" id="PF01281">
    <property type="entry name" value="Ribosomal_L9_N"/>
    <property type="match status" value="1"/>
</dbReference>
<dbReference type="SUPFAM" id="SSF55658">
    <property type="entry name" value="L9 N-domain-like"/>
    <property type="match status" value="1"/>
</dbReference>
<dbReference type="SUPFAM" id="SSF55653">
    <property type="entry name" value="Ribosomal protein L9 C-domain"/>
    <property type="match status" value="1"/>
</dbReference>
<dbReference type="PROSITE" id="PS00651">
    <property type="entry name" value="RIBOSOMAL_L9"/>
    <property type="match status" value="1"/>
</dbReference>
<name>RL9_PARDP</name>
<protein>
    <recommendedName>
        <fullName evidence="1">Large ribosomal subunit protein bL9</fullName>
    </recommendedName>
    <alternativeName>
        <fullName evidence="2">50S ribosomal protein L9</fullName>
    </alternativeName>
</protein>
<feature type="chain" id="PRO_1000014826" description="Large ribosomal subunit protein bL9">
    <location>
        <begin position="1"/>
        <end position="194"/>
    </location>
</feature>
<sequence>MQVILLERVAKLGQMGEVVKVKDGFARNFLLPQGKALRASDANIQAFEARKAELASRNDETRAEAEKIAEKLDGQTFVIIRSASDAGALYGSVTPRDAADVAIAEGFAVERRQVVLTAPIKELGLHEVRVHLHPEVDVTIKLNVARSAEEAELQASGKSIQELAAEEEAAAEFEIAELFDDIGSAGRDEDEAAN</sequence>
<accession>A1B0F6</accession>
<gene>
    <name evidence="1" type="primary">rplI</name>
    <name type="ordered locus">Pden_0889</name>
</gene>